<dbReference type="EMBL" id="AY961628">
    <property type="protein sequence ID" value="AAY41120.1"/>
    <property type="molecule type" value="Genomic_DNA"/>
</dbReference>
<dbReference type="SMR" id="Q3KST0"/>
<dbReference type="IntAct" id="Q3KST0">
    <property type="interactions" value="1"/>
</dbReference>
<dbReference type="Proteomes" id="UP000007641">
    <property type="component" value="Genome"/>
</dbReference>
<dbReference type="GO" id="GO:0044204">
    <property type="term" value="C:host cell nuclear matrix"/>
    <property type="evidence" value="ECO:0007669"/>
    <property type="project" value="UniProtKB-SubCell"/>
</dbReference>
<dbReference type="GO" id="GO:0052150">
    <property type="term" value="P:symbiont-mediated perturbation of host apoptosis"/>
    <property type="evidence" value="ECO:0007669"/>
    <property type="project" value="UniProtKB-KW"/>
</dbReference>
<dbReference type="GO" id="GO:0039645">
    <property type="term" value="P:symbiont-mediated perturbation of host cell cycle G1/S transition checkpoint"/>
    <property type="evidence" value="ECO:0007669"/>
    <property type="project" value="UniProtKB-KW"/>
</dbReference>
<dbReference type="GO" id="GO:0019042">
    <property type="term" value="P:viral latency"/>
    <property type="evidence" value="ECO:0007669"/>
    <property type="project" value="UniProtKB-KW"/>
</dbReference>
<dbReference type="InterPro" id="IPR007706">
    <property type="entry name" value="EBNA-3/4/6"/>
</dbReference>
<dbReference type="Pfam" id="PF05009">
    <property type="entry name" value="EBV-NA3"/>
    <property type="match status" value="1"/>
</dbReference>
<comment type="function">
    <text evidence="1">Plays an essential role for the activation and immortalization of human B-cells. Represses transcription of viral promoters TP1 and Cp through interaction with host RBPJ, and inhibits EBNA2-mediated activation of these promoters. Targets host chromatin through interactions with host transcription factors, especially RBPJ and IRF4. Alternatively, EBNA6 also regulates the transcription of the EBV oncogene LMP1 in a cell cycle-dependent manner. Modulates the activity of several host proteins involved in cell cycle regulation including host cyclin A, MYC, RB, p21 and p27 mainly through binding to the host SCF(SKP2) complex. Inhibits the promoter of host H2AX and targets H2AX to proteasomal degradation in order to promote latency and cell proliferation. Upregulates host PIM1 expression and stabilization. Potentiates PIM1 to promote cell proliferation by inhibiting the growth suppressive properties of p21.</text>
</comment>
<comment type="subunit">
    <text evidence="1">Interacts with host CTPB1; this interaction leads to gene repression, but also seems to interfere with the repressive function of CtBP pre-bound to DNA, leading to EBNA6 mediated up-regulation of many host genes. Interacts with host MYC; this interaction enhances MYC stability. Interacts (via N-terminus) with host RBPJ. Interacts (via N-terminus) with host histone H2AX; this interaction facilitates H2AX proteasomal degradation. Interacts with host TP73; this interaction inhibits TP73-mediated apoptotic pathway. Interacts (via N-terminus) with host PIM1; this interaction upregulates and stabilizes PIM1 and induces cell proliferation by inhibiting the growth suppressive properties of p21.</text>
</comment>
<comment type="subcellular location">
    <subcellularLocation>
        <location evidence="1">Host nucleus</location>
    </subcellularLocation>
    <subcellularLocation>
        <location evidence="1">Host nucleus matrix</location>
    </subcellularLocation>
    <text evidence="1">Associated with the nuclear matrix.</text>
</comment>
<comment type="similarity">
    <text evidence="3">Belongs to the herpesviridae EBNA-6 family.</text>
</comment>
<proteinExistence type="inferred from homology"/>
<name>EBNA6_EBVG</name>
<organism>
    <name type="scientific">Epstein-Barr virus (strain GD1)</name>
    <name type="common">HHV-4</name>
    <name type="synonym">Human gammaherpesvirus 4</name>
    <dbReference type="NCBI Taxonomy" id="10376"/>
    <lineage>
        <taxon>Viruses</taxon>
        <taxon>Duplodnaviria</taxon>
        <taxon>Heunggongvirae</taxon>
        <taxon>Peploviricota</taxon>
        <taxon>Herviviricetes</taxon>
        <taxon>Herpesvirales</taxon>
        <taxon>Orthoherpesviridae</taxon>
        <taxon>Gammaherpesvirinae</taxon>
        <taxon>Lymphocryptovirus</taxon>
        <taxon>Lymphocryptovirus humangamma4</taxon>
    </lineage>
</organism>
<organismHost>
    <name type="scientific">Homo sapiens</name>
    <name type="common">Human</name>
    <dbReference type="NCBI Taxonomy" id="9606"/>
</organismHost>
<evidence type="ECO:0000250" key="1">
    <source>
        <dbReference type="UniProtKB" id="P03204"/>
    </source>
</evidence>
<evidence type="ECO:0000256" key="2">
    <source>
        <dbReference type="SAM" id="MobiDB-lite"/>
    </source>
</evidence>
<evidence type="ECO:0000305" key="3"/>
<feature type="chain" id="PRO_0000375939" description="Epstein-Barr nuclear antigen 6">
    <location>
        <begin position="1"/>
        <end position="1009"/>
    </location>
</feature>
<feature type="region of interest" description="Disordered" evidence="2">
    <location>
        <begin position="1"/>
        <end position="70"/>
    </location>
</feature>
<feature type="region of interest" description="Disordered" evidence="2">
    <location>
        <begin position="356"/>
        <end position="504"/>
    </location>
</feature>
<feature type="region of interest" description="Disordered" evidence="2">
    <location>
        <begin position="516"/>
        <end position="646"/>
    </location>
</feature>
<feature type="region of interest" description="Disordered" evidence="2">
    <location>
        <begin position="663"/>
        <end position="922"/>
    </location>
</feature>
<feature type="region of interest" description="Disordered" evidence="2">
    <location>
        <begin position="948"/>
        <end position="971"/>
    </location>
</feature>
<feature type="region of interest" description="Disordered" evidence="2">
    <location>
        <begin position="984"/>
        <end position="1009"/>
    </location>
</feature>
<feature type="compositionally biased region" description="Basic and acidic residues" evidence="2">
    <location>
        <begin position="12"/>
        <end position="31"/>
    </location>
</feature>
<feature type="compositionally biased region" description="Acidic residues" evidence="2">
    <location>
        <begin position="381"/>
        <end position="391"/>
    </location>
</feature>
<feature type="compositionally biased region" description="Polar residues" evidence="2">
    <location>
        <begin position="445"/>
        <end position="461"/>
    </location>
</feature>
<feature type="compositionally biased region" description="Pro residues" evidence="2">
    <location>
        <begin position="479"/>
        <end position="495"/>
    </location>
</feature>
<feature type="compositionally biased region" description="Pro residues" evidence="2">
    <location>
        <begin position="563"/>
        <end position="574"/>
    </location>
</feature>
<feature type="compositionally biased region" description="Polar residues" evidence="2">
    <location>
        <begin position="622"/>
        <end position="641"/>
    </location>
</feature>
<feature type="compositionally biased region" description="Polar residues" evidence="2">
    <location>
        <begin position="664"/>
        <end position="679"/>
    </location>
</feature>
<feature type="compositionally biased region" description="Basic and acidic residues" evidence="2">
    <location>
        <begin position="680"/>
        <end position="689"/>
    </location>
</feature>
<feature type="compositionally biased region" description="Low complexity" evidence="2">
    <location>
        <begin position="710"/>
        <end position="769"/>
    </location>
</feature>
<feature type="compositionally biased region" description="Low complexity" evidence="2">
    <location>
        <begin position="776"/>
        <end position="798"/>
    </location>
</feature>
<feature type="compositionally biased region" description="Polar residues" evidence="2">
    <location>
        <begin position="862"/>
        <end position="874"/>
    </location>
</feature>
<feature type="compositionally biased region" description="Low complexity" evidence="2">
    <location>
        <begin position="876"/>
        <end position="898"/>
    </location>
</feature>
<feature type="compositionally biased region" description="Pro residues" evidence="2">
    <location>
        <begin position="899"/>
        <end position="916"/>
    </location>
</feature>
<keyword id="KW-1078">G1/S host cell cycle checkpoint dysregulation by virus</keyword>
<keyword id="KW-1048">Host nucleus</keyword>
<keyword id="KW-0945">Host-virus interaction</keyword>
<keyword id="KW-1119">Modulation of host cell apoptosis by virus</keyword>
<keyword id="KW-1121">Modulation of host cell cycle by virus</keyword>
<keyword id="KW-0677">Repeat</keyword>
<keyword id="KW-0804">Transcription</keyword>
<keyword id="KW-0805">Transcription regulation</keyword>
<keyword id="KW-1251">Viral latency</keyword>
<keyword id="KW-1276">Viral latency initiation and maintenance</keyword>
<gene>
    <name type="primary">EBNA6</name>
    <name type="ORF">BERF3-BERF4</name>
</gene>
<sequence length="1009" mass="112164">MESFEGQGDSRQSPDNERGDNVQTTGEHDQDPGPGPPSSGASERLVPEESYSRDQQPWGQSRGDENRGWMQRIRRRRRRRAALSGHLLDTEDNVPPWLPPHDIAPYVARNIRDAACRAVKQSHLQALSNLILDSGLDTQHILCFVMAARQRLQDIRRGPLVVEGGVGWRHWLLTSPSQSWPMGYRTATLRTLTPVPNRVGADSIMLTATFGCQNAARTLNTFSATVWTPPHAGPREQERYAREAEVRFLRGKWQRRYRRIYDLIELCGSLHHIWQNLLQTEENLLDFVRFMGVMSSCNNPAVNYWFHKTIGNFKPYYPWNAPPNENPYHARRGIKEHVIQNAFRKAQIQGLSMLATVGEPRGDATSETSSDEDTGRQGSDVELESSDDELPYIDPNMEPVQQRPVMFVSRVPAKKPRKLPWPTPKTHPVKRTNVKTSDRSDKAEAQSTPERPGPSEQSSVTVEPAHPTPVEMPMVILHQPPPVPKPVPVKPTPPPSRRRRGACVVYDDDVIEVIDVETTEDSSSVSQPNKPHRKHQDGFQRSGRRQKRAAPPTVSPSDTGPPAAGPPAAGPPAAGPHILTPPSARPRIMAPPVVRMFMRERQLPQSTGRKPQCFWEMRASREITQMQQEPSSHLQSATQPTMPRPSWVPSVCALSVMDAGKAQPIQSSHLSSMSPTQPISHEEQPRYEDPDAPLDLSLHPDVAAPPAPRAPYQGYQEQPAPQAPYQGYQEQPAPQAPYQGYQEQPAPQAPYQGYQEQPAPQAPYQGYQEQPPPQAPYQGYQEQPAPQAPYQGYQEPPAHGLQSSSYPGYAGPWTPRSQHPCYRHPWAPWSQDPVHGHTQGPWDPRAPHLPPQWDGSAGHGQDQVSQFPHLQSETGPPRLQLSSVPLVSSSAPSWSSPQPRAPIRPIPTRFPPPPMPLQDSMAVGCDSSGTACPSMPFASDYSQGAFTPLDINATTPKRPRVEESSHGPARCSQATAEAQEILSDNSEISVFPKDAKQTDYDASTESELD</sequence>
<accession>Q3KST0</accession>
<reference key="1">
    <citation type="journal article" date="2005" name="J. Virol.">
        <title>Genomic sequence analysis of Epstein-Barr virus strain GD1 from a nasopharyngeal carcinoma patient.</title>
        <authorList>
            <person name="Zeng M.-S."/>
            <person name="Li D.-J."/>
            <person name="Liu Q.-L."/>
            <person name="Song L.-B."/>
            <person name="Li M.-Z."/>
            <person name="Zhang R.-H."/>
            <person name="Yu X.-J."/>
            <person name="Wang H.-M."/>
            <person name="Ernberg I."/>
            <person name="Zeng Y.-X."/>
        </authorList>
    </citation>
    <scope>NUCLEOTIDE SEQUENCE [LARGE SCALE GENOMIC DNA]</scope>
</reference>
<protein>
    <recommendedName>
        <fullName>Epstein-Barr nuclear antigen 6</fullName>
        <shortName>EBNA-6</shortName>
        <shortName>EBV nuclear antigen 6</shortName>
    </recommendedName>
    <alternativeName>
        <fullName>Epstein-Barr nuclear antigen 3C</fullName>
        <shortName>EBNA-3C</shortName>
        <shortName>EBV nuclear antigen 3C</shortName>
    </alternativeName>
    <alternativeName>
        <fullName>Epstein-Barr nuclear antigen 4B</fullName>
        <shortName>EBNA-4B</shortName>
        <shortName>EBV nuclear antigen 4B</shortName>
    </alternativeName>
</protein>